<comment type="function">
    <text evidence="2 3">Involved in nonsense-mediated mRNA decay (NMD) by acting as a bridge between the mRNA decapping complex and the NMD machinery. May act by targeting the NMD machinery to the P-body and recruiting the decapping machinery to aberrant mRNAs. Required for UPF1/RENT1 localization to the P-body. Plays a role in glucocorticoid receptor-mediated mRNA degradation by interacting with the glucocorticoid receptor NR3C1 in a ligand-dependent manner when it is bound to the 5' UTR of target mRNAs and recruiting the RNA helicase UPF1 and the mRNA-decapping enzyme DCP1A, leading to RNA decay. Also acts as a nuclear receptor coactivator. May play a role in controlling the energy balance between energy storage and energy expenditure.</text>
</comment>
<comment type="subunit">
    <text evidence="3">Interacts with UPF1/RENT1; preferentially interacts with hyperphosphorylated form. Interacts with DCP1A. Interacts with many nuclear receptors including ESR1, ESRRA, ESRRG, NR3C1/GR, NR5A1, PGR, TR, RAR and RXR.</text>
</comment>
<comment type="subcellular location">
    <subcellularLocation>
        <location evidence="1">Nucleus</location>
    </subcellularLocation>
    <subcellularLocation>
        <location evidence="1">Cytoplasm</location>
        <location evidence="1">P-body</location>
    </subcellularLocation>
</comment>
<comment type="domain">
    <text evidence="1">The interaction between PNRC2 and nuclear receptors is dependent on the SH3 binding motif.</text>
</comment>
<comment type="similarity">
    <text evidence="5">Belongs to the PNRC family. PNRC2 subfamily.</text>
</comment>
<keyword id="KW-0010">Activator</keyword>
<keyword id="KW-0963">Cytoplasm</keyword>
<keyword id="KW-0866">Nonsense-mediated mRNA decay</keyword>
<keyword id="KW-0539">Nucleus</keyword>
<keyword id="KW-1185">Reference proteome</keyword>
<keyword id="KW-0804">Transcription</keyword>
<keyword id="KW-0805">Transcription regulation</keyword>
<name>PNRC2_BOVIN</name>
<evidence type="ECO:0000250" key="1"/>
<evidence type="ECO:0000250" key="2">
    <source>
        <dbReference type="UniProtKB" id="Q9CR73"/>
    </source>
</evidence>
<evidence type="ECO:0000250" key="3">
    <source>
        <dbReference type="UniProtKB" id="Q9NPJ4"/>
    </source>
</evidence>
<evidence type="ECO:0000256" key="4">
    <source>
        <dbReference type="SAM" id="MobiDB-lite"/>
    </source>
</evidence>
<evidence type="ECO:0000305" key="5"/>
<organism>
    <name type="scientific">Bos taurus</name>
    <name type="common">Bovine</name>
    <dbReference type="NCBI Taxonomy" id="9913"/>
    <lineage>
        <taxon>Eukaryota</taxon>
        <taxon>Metazoa</taxon>
        <taxon>Chordata</taxon>
        <taxon>Craniata</taxon>
        <taxon>Vertebrata</taxon>
        <taxon>Euteleostomi</taxon>
        <taxon>Mammalia</taxon>
        <taxon>Eutheria</taxon>
        <taxon>Laurasiatheria</taxon>
        <taxon>Artiodactyla</taxon>
        <taxon>Ruminantia</taxon>
        <taxon>Pecora</taxon>
        <taxon>Bovidae</taxon>
        <taxon>Bovinae</taxon>
        <taxon>Bos</taxon>
    </lineage>
</organism>
<proteinExistence type="evidence at transcript level"/>
<feature type="chain" id="PRO_0000350624" description="Proline-rich nuclear receptor coactivator 2">
    <location>
        <begin position="1"/>
        <end position="139"/>
    </location>
</feature>
<feature type="region of interest" description="Disordered" evidence="4">
    <location>
        <begin position="1"/>
        <end position="111"/>
    </location>
</feature>
<feature type="short sequence motif" description="SH3-binding">
    <location>
        <begin position="99"/>
        <end position="105"/>
    </location>
</feature>
<feature type="compositionally biased region" description="Polar residues" evidence="4">
    <location>
        <begin position="11"/>
        <end position="36"/>
    </location>
</feature>
<feature type="compositionally biased region" description="Polar residues" evidence="4">
    <location>
        <begin position="48"/>
        <end position="59"/>
    </location>
</feature>
<feature type="compositionally biased region" description="Low complexity" evidence="4">
    <location>
        <begin position="60"/>
        <end position="75"/>
    </location>
</feature>
<feature type="compositionally biased region" description="Polar residues" evidence="4">
    <location>
        <begin position="76"/>
        <end position="93"/>
    </location>
</feature>
<feature type="compositionally biased region" description="Pro residues" evidence="4">
    <location>
        <begin position="101"/>
        <end position="111"/>
    </location>
</feature>
<reference key="1">
    <citation type="submission" date="2006-08" db="EMBL/GenBank/DDBJ databases">
        <authorList>
            <consortium name="NIH - Mammalian Gene Collection (MGC) project"/>
        </authorList>
    </citation>
    <scope>NUCLEOTIDE SEQUENCE [LARGE SCALE MRNA]</scope>
    <source>
        <strain>Hereford</strain>
        <tissue>Fetal muscle</tissue>
    </source>
</reference>
<accession>Q0VCW6</accession>
<protein>
    <recommendedName>
        <fullName>Proline-rich nuclear receptor coactivator 2</fullName>
    </recommendedName>
</protein>
<gene>
    <name type="primary">PNRC2</name>
</gene>
<dbReference type="EMBL" id="BC119962">
    <property type="protein sequence ID" value="AAI19963.1"/>
    <property type="molecule type" value="mRNA"/>
</dbReference>
<dbReference type="RefSeq" id="NP_001070425.1">
    <property type="nucleotide sequence ID" value="NM_001076957.1"/>
</dbReference>
<dbReference type="RefSeq" id="XP_059733025.1">
    <property type="nucleotide sequence ID" value="XM_059877042.1"/>
</dbReference>
<dbReference type="FunCoup" id="Q0VCW6">
    <property type="interactions" value="1992"/>
</dbReference>
<dbReference type="STRING" id="9913.ENSBTAP00000040573"/>
<dbReference type="PaxDb" id="9913-ENSBTAP00000040573"/>
<dbReference type="Ensembl" id="ENSBTAT00000042971.3">
    <property type="protein sequence ID" value="ENSBTAP00000040573.1"/>
    <property type="gene ID" value="ENSBTAG00000030435.3"/>
</dbReference>
<dbReference type="Ensembl" id="ENSBTAT00000127676.1">
    <property type="protein sequence ID" value="ENSBTAP00000095376.1"/>
    <property type="gene ID" value="ENSBTAG00000030435.3"/>
</dbReference>
<dbReference type="GeneID" id="767836"/>
<dbReference type="KEGG" id="bta:767836"/>
<dbReference type="CTD" id="55629"/>
<dbReference type="VEuPathDB" id="HostDB:ENSBTAG00000030435"/>
<dbReference type="VGNC" id="VGNC:33099">
    <property type="gene designation" value="PNRC2"/>
</dbReference>
<dbReference type="eggNOG" id="ENOG502RZZX">
    <property type="taxonomic scope" value="Eukaryota"/>
</dbReference>
<dbReference type="GeneTree" id="ENSGT00530000063881"/>
<dbReference type="HOGENOM" id="CLU_086541_1_0_1"/>
<dbReference type="InParanoid" id="Q0VCW6"/>
<dbReference type="OMA" id="RNTTKNH"/>
<dbReference type="OrthoDB" id="8732832at2759"/>
<dbReference type="TreeFam" id="TF333211"/>
<dbReference type="Reactome" id="R-BTA-975957">
    <property type="pathway name" value="Nonsense Mediated Decay (NMD) enhanced by the Exon Junction Complex (EJC)"/>
</dbReference>
<dbReference type="Proteomes" id="UP000009136">
    <property type="component" value="Chromosome 2"/>
</dbReference>
<dbReference type="Bgee" id="ENSBTAG00000030435">
    <property type="expression patterns" value="Expressed in abdominal lymph node and 107 other cell types or tissues"/>
</dbReference>
<dbReference type="GO" id="GO:0005794">
    <property type="term" value="C:Golgi apparatus"/>
    <property type="evidence" value="ECO:0007669"/>
    <property type="project" value="Ensembl"/>
</dbReference>
<dbReference type="GO" id="GO:0005654">
    <property type="term" value="C:nucleoplasm"/>
    <property type="evidence" value="ECO:0007669"/>
    <property type="project" value="Ensembl"/>
</dbReference>
<dbReference type="GO" id="GO:0005634">
    <property type="term" value="C:nucleus"/>
    <property type="evidence" value="ECO:0000250"/>
    <property type="project" value="UniProtKB"/>
</dbReference>
<dbReference type="GO" id="GO:0000932">
    <property type="term" value="C:P-body"/>
    <property type="evidence" value="ECO:0000250"/>
    <property type="project" value="UniProtKB"/>
</dbReference>
<dbReference type="GO" id="GO:0000184">
    <property type="term" value="P:nuclear-transcribed mRNA catabolic process, nonsense-mediated decay"/>
    <property type="evidence" value="ECO:0000250"/>
    <property type="project" value="UniProtKB"/>
</dbReference>
<dbReference type="InterPro" id="IPR028322">
    <property type="entry name" value="PNRC-like_rgn"/>
</dbReference>
<dbReference type="InterPro" id="IPR026780">
    <property type="entry name" value="PNRC1/2"/>
</dbReference>
<dbReference type="PANTHER" id="PTHR15405">
    <property type="entry name" value="PROLINE-RICH NUCLEAR RECEPTOR COACTIVATOR"/>
    <property type="match status" value="1"/>
</dbReference>
<dbReference type="Pfam" id="PF15365">
    <property type="entry name" value="PNRC"/>
    <property type="match status" value="1"/>
</dbReference>
<sequence>MGGGERYNIPAPQTRNVSKNQQQLSRQKTKDQNSQMKIVHKKKERGHTYNSSSAAWQAMQNGGKNKNFPNNQNWNSSLSSPTLLFKSQTNQNYAGAKFSEPPSPSVLPKPPSHWVPVSFNPSDKEIMTFQLKTLLKVQV</sequence>